<reference key="1">
    <citation type="journal article" date="2000" name="Nature">
        <title>Sequence and analysis of chromosome 3 of the plant Arabidopsis thaliana.</title>
        <authorList>
            <person name="Salanoubat M."/>
            <person name="Lemcke K."/>
            <person name="Rieger M."/>
            <person name="Ansorge W."/>
            <person name="Unseld M."/>
            <person name="Fartmann B."/>
            <person name="Valle G."/>
            <person name="Bloecker H."/>
            <person name="Perez-Alonso M."/>
            <person name="Obermaier B."/>
            <person name="Delseny M."/>
            <person name="Boutry M."/>
            <person name="Grivell L.A."/>
            <person name="Mache R."/>
            <person name="Puigdomenech P."/>
            <person name="De Simone V."/>
            <person name="Choisne N."/>
            <person name="Artiguenave F."/>
            <person name="Robert C."/>
            <person name="Brottier P."/>
            <person name="Wincker P."/>
            <person name="Cattolico L."/>
            <person name="Weissenbach J."/>
            <person name="Saurin W."/>
            <person name="Quetier F."/>
            <person name="Schaefer M."/>
            <person name="Mueller-Auer S."/>
            <person name="Gabel C."/>
            <person name="Fuchs M."/>
            <person name="Benes V."/>
            <person name="Wurmbach E."/>
            <person name="Drzonek H."/>
            <person name="Erfle H."/>
            <person name="Jordan N."/>
            <person name="Bangert S."/>
            <person name="Wiedelmann R."/>
            <person name="Kranz H."/>
            <person name="Voss H."/>
            <person name="Holland R."/>
            <person name="Brandt P."/>
            <person name="Nyakatura G."/>
            <person name="Vezzi A."/>
            <person name="D'Angelo M."/>
            <person name="Pallavicini A."/>
            <person name="Toppo S."/>
            <person name="Simionati B."/>
            <person name="Conrad A."/>
            <person name="Hornischer K."/>
            <person name="Kauer G."/>
            <person name="Loehnert T.-H."/>
            <person name="Nordsiek G."/>
            <person name="Reichelt J."/>
            <person name="Scharfe M."/>
            <person name="Schoen O."/>
            <person name="Bargues M."/>
            <person name="Terol J."/>
            <person name="Climent J."/>
            <person name="Navarro P."/>
            <person name="Collado C."/>
            <person name="Perez-Perez A."/>
            <person name="Ottenwaelder B."/>
            <person name="Duchemin D."/>
            <person name="Cooke R."/>
            <person name="Laudie M."/>
            <person name="Berger-Llauro C."/>
            <person name="Purnelle B."/>
            <person name="Masuy D."/>
            <person name="de Haan M."/>
            <person name="Maarse A.C."/>
            <person name="Alcaraz J.-P."/>
            <person name="Cottet A."/>
            <person name="Casacuberta E."/>
            <person name="Monfort A."/>
            <person name="Argiriou A."/>
            <person name="Flores M."/>
            <person name="Liguori R."/>
            <person name="Vitale D."/>
            <person name="Mannhaupt G."/>
            <person name="Haase D."/>
            <person name="Schoof H."/>
            <person name="Rudd S."/>
            <person name="Zaccaria P."/>
            <person name="Mewes H.-W."/>
            <person name="Mayer K.F.X."/>
            <person name="Kaul S."/>
            <person name="Town C.D."/>
            <person name="Koo H.L."/>
            <person name="Tallon L.J."/>
            <person name="Jenkins J."/>
            <person name="Rooney T."/>
            <person name="Rizzo M."/>
            <person name="Walts A."/>
            <person name="Utterback T."/>
            <person name="Fujii C.Y."/>
            <person name="Shea T.P."/>
            <person name="Creasy T.H."/>
            <person name="Haas B."/>
            <person name="Maiti R."/>
            <person name="Wu D."/>
            <person name="Peterson J."/>
            <person name="Van Aken S."/>
            <person name="Pai G."/>
            <person name="Militscher J."/>
            <person name="Sellers P."/>
            <person name="Gill J.E."/>
            <person name="Feldblyum T.V."/>
            <person name="Preuss D."/>
            <person name="Lin X."/>
            <person name="Nierman W.C."/>
            <person name="Salzberg S.L."/>
            <person name="White O."/>
            <person name="Venter J.C."/>
            <person name="Fraser C.M."/>
            <person name="Kaneko T."/>
            <person name="Nakamura Y."/>
            <person name="Sato S."/>
            <person name="Kato T."/>
            <person name="Asamizu E."/>
            <person name="Sasamoto S."/>
            <person name="Kimura T."/>
            <person name="Idesawa K."/>
            <person name="Kawashima K."/>
            <person name="Kishida Y."/>
            <person name="Kiyokawa C."/>
            <person name="Kohara M."/>
            <person name="Matsumoto M."/>
            <person name="Matsuno A."/>
            <person name="Muraki A."/>
            <person name="Nakayama S."/>
            <person name="Nakazaki N."/>
            <person name="Shinpo S."/>
            <person name="Takeuchi C."/>
            <person name="Wada T."/>
            <person name="Watanabe A."/>
            <person name="Yamada M."/>
            <person name="Yasuda M."/>
            <person name="Tabata S."/>
        </authorList>
    </citation>
    <scope>NUCLEOTIDE SEQUENCE [LARGE SCALE GENOMIC DNA]</scope>
    <source>
        <strain>cv. Columbia</strain>
    </source>
</reference>
<reference key="2">
    <citation type="journal article" date="2017" name="Plant J.">
        <title>Araport11: a complete reannotation of the Arabidopsis thaliana reference genome.</title>
        <authorList>
            <person name="Cheng C.Y."/>
            <person name="Krishnakumar V."/>
            <person name="Chan A.P."/>
            <person name="Thibaud-Nissen F."/>
            <person name="Schobel S."/>
            <person name="Town C.D."/>
        </authorList>
    </citation>
    <scope>GENOME REANNOTATION</scope>
    <source>
        <strain>cv. Columbia</strain>
    </source>
</reference>
<reference key="3">
    <citation type="journal article" date="2004" name="Plant J.">
        <title>Selective expression of a novel high-affinity transport system for acidic and neutral amino acids in the tapetum cells of Arabidopsis flowers.</title>
        <authorList>
            <person name="Lee Y.-H."/>
            <person name="Tegeder M."/>
        </authorList>
    </citation>
    <scope>GENE FAMILY</scope>
    <source>
        <strain>cv. C24</strain>
    </source>
</reference>
<comment type="function">
    <text evidence="1">Amino acid transporter.</text>
</comment>
<comment type="subcellular location">
    <subcellularLocation>
        <location evidence="3">Cell membrane</location>
        <topology evidence="3">Multi-pass membrane protein</topology>
    </subcellularLocation>
</comment>
<comment type="similarity">
    <text evidence="3">Belongs to the amino acid/polyamine transporter 2 family. Amino acid/auxin permease (AAAP) (TC 2.A.18.2) subfamily.</text>
</comment>
<comment type="sequence caution" evidence="3">
    <conflict type="erroneous gene model prediction">
        <sequence resource="EMBL-CDS" id="AAF01559"/>
    </conflict>
</comment>
<accession>Q9SS86</accession>
<accession>Q9SGJ3</accession>
<sequence length="455" mass="50736">MAGIPDHIQDQHLVEEDQPFDLEDWLPITASRNANWYYSAFHNVTAIVGAGVLGLPYAMSELGWGPGVVVLILSWVITLYTLWQMIEMHEMFEGQRFDRYHELGQAAFGKKLGLYIIVPLQLLVEISVCIVYMVTGGKSLKNVHDLALGDGDKCTKLRIQHFILIFASSQFVLSLLKNFNSISGVSLVAAVMSVSYSTIAWVASLRKGATTGSVEYGYRKRTTSVPLAFLSALGEMAFAYAGHNVVLEIQATIPSTPENPSKRPMWKGAVVAYIIVAFCYFPVALVGFKTFGNSVEESILESLTKPTALVIVANMFVVIHLLGSYQVYAMPVFDMIESVMIRIWHFSPTRVLRFTIRWTFVAATMGIAVGLPYYSALLSFFGGFVFAPTTYFIPCIMWLILKKPKRFSLSWCMNWFCIIFGLVLMIIAPIGGLAKLIYNIQKGTLPNSRCNLPKH</sequence>
<dbReference type="EMBL" id="AC009325">
    <property type="protein sequence ID" value="AAF01559.1"/>
    <property type="status" value="ALT_SEQ"/>
    <property type="molecule type" value="Genomic_DNA"/>
</dbReference>
<dbReference type="EMBL" id="AC010797">
    <property type="protein sequence ID" value="AAF03432.1"/>
    <property type="molecule type" value="Genomic_DNA"/>
</dbReference>
<dbReference type="EMBL" id="CP002686">
    <property type="protein sequence ID" value="AEE73711.1"/>
    <property type="molecule type" value="Genomic_DNA"/>
</dbReference>
<dbReference type="RefSeq" id="NP_186825.2">
    <property type="nucleotide sequence ID" value="NM_111042.3"/>
</dbReference>
<dbReference type="SMR" id="Q9SS86"/>
<dbReference type="FunCoup" id="Q9SS86">
    <property type="interactions" value="1"/>
</dbReference>
<dbReference type="STRING" id="3702.Q9SS86"/>
<dbReference type="PaxDb" id="3702-AT3G01760.1"/>
<dbReference type="ProteomicsDB" id="238448"/>
<dbReference type="EnsemblPlants" id="AT3G01760.1">
    <property type="protein sequence ID" value="AT3G01760.1"/>
    <property type="gene ID" value="AT3G01760"/>
</dbReference>
<dbReference type="GeneID" id="821086"/>
<dbReference type="Gramene" id="AT3G01760.1">
    <property type="protein sequence ID" value="AT3G01760.1"/>
    <property type="gene ID" value="AT3G01760"/>
</dbReference>
<dbReference type="KEGG" id="ath:AT3G01760"/>
<dbReference type="Araport" id="AT3G01760"/>
<dbReference type="TAIR" id="AT3G01760">
    <property type="gene designation" value="LHT6"/>
</dbReference>
<dbReference type="eggNOG" id="KOG1303">
    <property type="taxonomic scope" value="Eukaryota"/>
</dbReference>
<dbReference type="HOGENOM" id="CLU_031160_0_0_1"/>
<dbReference type="InParanoid" id="Q9SS86"/>
<dbReference type="OMA" id="ESVMIRI"/>
<dbReference type="OrthoDB" id="40134at2759"/>
<dbReference type="PhylomeDB" id="Q9SS86"/>
<dbReference type="PRO" id="PR:Q9SS86"/>
<dbReference type="Proteomes" id="UP000006548">
    <property type="component" value="Chromosome 3"/>
</dbReference>
<dbReference type="ExpressionAtlas" id="Q9SS86">
    <property type="expression patterns" value="baseline and differential"/>
</dbReference>
<dbReference type="GO" id="GO:0005886">
    <property type="term" value="C:plasma membrane"/>
    <property type="evidence" value="ECO:0007669"/>
    <property type="project" value="UniProtKB-SubCell"/>
</dbReference>
<dbReference type="GO" id="GO:0015180">
    <property type="term" value="F:L-alanine transmembrane transporter activity"/>
    <property type="evidence" value="ECO:0000315"/>
    <property type="project" value="TAIR"/>
</dbReference>
<dbReference type="GO" id="GO:0015183">
    <property type="term" value="F:L-aspartate transmembrane transporter activity"/>
    <property type="evidence" value="ECO:0000315"/>
    <property type="project" value="TAIR"/>
</dbReference>
<dbReference type="GO" id="GO:0005313">
    <property type="term" value="F:L-glutamate transmembrane transporter activity"/>
    <property type="evidence" value="ECO:0000315"/>
    <property type="project" value="TAIR"/>
</dbReference>
<dbReference type="GO" id="GO:0015808">
    <property type="term" value="P:L-alanine transport"/>
    <property type="evidence" value="ECO:0000315"/>
    <property type="project" value="TAIR"/>
</dbReference>
<dbReference type="GO" id="GO:0070778">
    <property type="term" value="P:L-aspartate transmembrane transport"/>
    <property type="evidence" value="ECO:0000315"/>
    <property type="project" value="TAIR"/>
</dbReference>
<dbReference type="GO" id="GO:0098712">
    <property type="term" value="P:L-glutamate import across plasma membrane"/>
    <property type="evidence" value="ECO:0000315"/>
    <property type="project" value="TAIR"/>
</dbReference>
<dbReference type="FunFam" id="1.20.1740.10:FF:000033">
    <property type="entry name" value="Lysine histidine transporter 1"/>
    <property type="match status" value="1"/>
</dbReference>
<dbReference type="InterPro" id="IPR013057">
    <property type="entry name" value="AA_transpt_TM"/>
</dbReference>
<dbReference type="PANTHER" id="PTHR48017">
    <property type="entry name" value="OS05G0424000 PROTEIN-RELATED"/>
    <property type="match status" value="1"/>
</dbReference>
<dbReference type="Pfam" id="PF01490">
    <property type="entry name" value="Aa_trans"/>
    <property type="match status" value="1"/>
</dbReference>
<keyword id="KW-0029">Amino-acid transport</keyword>
<keyword id="KW-1003">Cell membrane</keyword>
<keyword id="KW-0472">Membrane</keyword>
<keyword id="KW-1185">Reference proteome</keyword>
<keyword id="KW-0812">Transmembrane</keyword>
<keyword id="KW-1133">Transmembrane helix</keyword>
<keyword id="KW-0813">Transport</keyword>
<proteinExistence type="inferred from homology"/>
<organism>
    <name type="scientific">Arabidopsis thaliana</name>
    <name type="common">Mouse-ear cress</name>
    <dbReference type="NCBI Taxonomy" id="3702"/>
    <lineage>
        <taxon>Eukaryota</taxon>
        <taxon>Viridiplantae</taxon>
        <taxon>Streptophyta</taxon>
        <taxon>Embryophyta</taxon>
        <taxon>Tracheophyta</taxon>
        <taxon>Spermatophyta</taxon>
        <taxon>Magnoliopsida</taxon>
        <taxon>eudicotyledons</taxon>
        <taxon>Gunneridae</taxon>
        <taxon>Pentapetalae</taxon>
        <taxon>rosids</taxon>
        <taxon>malvids</taxon>
        <taxon>Brassicales</taxon>
        <taxon>Brassicaceae</taxon>
        <taxon>Camelineae</taxon>
        <taxon>Arabidopsis</taxon>
    </lineage>
</organism>
<evidence type="ECO:0000250" key="1"/>
<evidence type="ECO:0000255" key="2"/>
<evidence type="ECO:0000305" key="3"/>
<gene>
    <name type="ordered locus">At3g01760</name>
    <name type="ORF">F28J7.9</name>
    <name type="ORF">F4P13.31</name>
</gene>
<feature type="chain" id="PRO_0000387974" description="Lysine histidine transporter-like 4">
    <location>
        <begin position="1"/>
        <end position="455"/>
    </location>
</feature>
<feature type="topological domain" description="Cytoplasmic" evidence="2">
    <location>
        <begin position="1"/>
        <end position="38"/>
    </location>
</feature>
<feature type="transmembrane region" description="Helical" evidence="2">
    <location>
        <begin position="39"/>
        <end position="59"/>
    </location>
</feature>
<feature type="topological domain" description="Extracellular" evidence="2">
    <location>
        <begin position="60"/>
        <end position="61"/>
    </location>
</feature>
<feature type="transmembrane region" description="Helical" evidence="2">
    <location>
        <begin position="62"/>
        <end position="82"/>
    </location>
</feature>
<feature type="topological domain" description="Cytoplasmic" evidence="2">
    <location>
        <begin position="83"/>
        <end position="113"/>
    </location>
</feature>
<feature type="transmembrane region" description="Helical" evidence="2">
    <location>
        <begin position="114"/>
        <end position="134"/>
    </location>
</feature>
<feature type="topological domain" description="Extracellular" evidence="2">
    <location>
        <begin position="135"/>
        <end position="158"/>
    </location>
</feature>
<feature type="transmembrane region" description="Helical" evidence="2">
    <location>
        <begin position="159"/>
        <end position="179"/>
    </location>
</feature>
<feature type="topological domain" description="Cytoplasmic" evidence="2">
    <location>
        <begin position="180"/>
        <end position="181"/>
    </location>
</feature>
<feature type="transmembrane region" description="Helical" evidence="2">
    <location>
        <begin position="182"/>
        <end position="202"/>
    </location>
</feature>
<feature type="topological domain" description="Extracellular" evidence="2">
    <location>
        <begin position="203"/>
        <end position="226"/>
    </location>
</feature>
<feature type="transmembrane region" description="Helical" evidence="2">
    <location>
        <begin position="227"/>
        <end position="247"/>
    </location>
</feature>
<feature type="topological domain" description="Cytoplasmic" evidence="2">
    <location>
        <begin position="248"/>
        <end position="267"/>
    </location>
</feature>
<feature type="transmembrane region" description="Helical" evidence="2">
    <location>
        <begin position="268"/>
        <end position="288"/>
    </location>
</feature>
<feature type="topological domain" description="Extracellular" evidence="2">
    <location>
        <begin position="289"/>
        <end position="307"/>
    </location>
</feature>
<feature type="transmembrane region" description="Helical" evidence="2">
    <location>
        <begin position="308"/>
        <end position="328"/>
    </location>
</feature>
<feature type="topological domain" description="Cytoplasmic" evidence="2">
    <location>
        <begin position="329"/>
        <end position="357"/>
    </location>
</feature>
<feature type="transmembrane region" description="Helical" evidence="2">
    <location>
        <begin position="358"/>
        <end position="378"/>
    </location>
</feature>
<feature type="topological domain" description="Extracellular" evidence="2">
    <location>
        <position position="379"/>
    </location>
</feature>
<feature type="transmembrane region" description="Helical" evidence="2">
    <location>
        <begin position="380"/>
        <end position="400"/>
    </location>
</feature>
<feature type="topological domain" description="Cytoplasmic" evidence="2">
    <location>
        <begin position="401"/>
        <end position="412"/>
    </location>
</feature>
<feature type="transmembrane region" description="Helical" evidence="2">
    <location>
        <begin position="413"/>
        <end position="433"/>
    </location>
</feature>
<feature type="topological domain" description="Extracellular" evidence="2">
    <location>
        <begin position="434"/>
        <end position="455"/>
    </location>
</feature>
<name>LHTL4_ARATH</name>
<protein>
    <recommendedName>
        <fullName>Lysine histidine transporter-like 4</fullName>
    </recommendedName>
</protein>